<dbReference type="EMBL" id="CP000255">
    <property type="protein sequence ID" value="ABD22550.1"/>
    <property type="molecule type" value="Genomic_DNA"/>
</dbReference>
<dbReference type="RefSeq" id="WP_000278558.1">
    <property type="nucleotide sequence ID" value="NZ_CP027476.1"/>
</dbReference>
<dbReference type="SMR" id="Q2FEB0"/>
<dbReference type="KEGG" id="saa:SAUSA300_2333"/>
<dbReference type="HOGENOM" id="CLU_001265_14_0_9"/>
<dbReference type="OMA" id="WWYYARR"/>
<dbReference type="Proteomes" id="UP000001939">
    <property type="component" value="Chromosome"/>
</dbReference>
<dbReference type="GO" id="GO:0005886">
    <property type="term" value="C:plasma membrane"/>
    <property type="evidence" value="ECO:0007669"/>
    <property type="project" value="UniProtKB-SubCell"/>
</dbReference>
<dbReference type="GO" id="GO:0015112">
    <property type="term" value="F:nitrate transmembrane transporter activity"/>
    <property type="evidence" value="ECO:0007669"/>
    <property type="project" value="InterPro"/>
</dbReference>
<dbReference type="GO" id="GO:0042128">
    <property type="term" value="P:nitrate assimilation"/>
    <property type="evidence" value="ECO:0007669"/>
    <property type="project" value="UniProtKB-KW"/>
</dbReference>
<dbReference type="CDD" id="cd17341">
    <property type="entry name" value="MFS_NRT2_like"/>
    <property type="match status" value="1"/>
</dbReference>
<dbReference type="Gene3D" id="1.20.1250.20">
    <property type="entry name" value="MFS general substrate transporter like domains"/>
    <property type="match status" value="2"/>
</dbReference>
<dbReference type="InterPro" id="IPR011701">
    <property type="entry name" value="MFS"/>
</dbReference>
<dbReference type="InterPro" id="IPR020846">
    <property type="entry name" value="MFS_dom"/>
</dbReference>
<dbReference type="InterPro" id="IPR036259">
    <property type="entry name" value="MFS_trans_sf"/>
</dbReference>
<dbReference type="InterPro" id="IPR044772">
    <property type="entry name" value="NO3_transporter"/>
</dbReference>
<dbReference type="PANTHER" id="PTHR23515">
    <property type="entry name" value="HIGH-AFFINITY NITRATE TRANSPORTER 2.3"/>
    <property type="match status" value="1"/>
</dbReference>
<dbReference type="Pfam" id="PF07690">
    <property type="entry name" value="MFS_1"/>
    <property type="match status" value="1"/>
</dbReference>
<dbReference type="SUPFAM" id="SSF103473">
    <property type="entry name" value="MFS general substrate transporter"/>
    <property type="match status" value="1"/>
</dbReference>
<dbReference type="PROSITE" id="PS50850">
    <property type="entry name" value="MFS"/>
    <property type="match status" value="1"/>
</dbReference>
<reference key="1">
    <citation type="journal article" date="2006" name="Lancet">
        <title>Complete genome sequence of USA300, an epidemic clone of community-acquired meticillin-resistant Staphylococcus aureus.</title>
        <authorList>
            <person name="Diep B.A."/>
            <person name="Gill S.R."/>
            <person name="Chang R.F."/>
            <person name="Phan T.H."/>
            <person name="Chen J.H."/>
            <person name="Davidson M.G."/>
            <person name="Lin F."/>
            <person name="Lin J."/>
            <person name="Carleton H.A."/>
            <person name="Mongodin E.F."/>
            <person name="Sensabaugh G.F."/>
            <person name="Perdreau-Remington F."/>
        </authorList>
    </citation>
    <scope>NUCLEOTIDE SEQUENCE [LARGE SCALE GENOMIC DNA]</scope>
    <source>
        <strain>USA300</strain>
    </source>
</reference>
<sequence length="389" mass="42148">MYKTKGGFQLTLQTLSLVVGFMAWSIIAPLMPFIKQDVNVTEGQISIILAIPVILGSVLRVPFGYLTNIVGAKWVFFTSFIVLLFPIFFLSQAQTPGMLMASGFFLGVGGAIFSVGVTSVPKYFPKEKVGLANGIYGMGNIGTAVSSFLAPPIAGIIGWQTTVRSYLIIIALFALIMFIFGDTQERKIKVPLMAQMKTLSKNYKLYYLSYWYFITFGAFVAFGIFLPNYLVNHFGIDKVDAGIRSGVFIALATFLRPIGGILGDKFNAVKVLMIDFVVMIIGAIILGISDHIALFTVGCLTISICAGIGNGLIFKLVPSYFLNEAGSANGIVSMMGGLGGFFPPLVITYVANLTGSSHLAFIFLAVFGCIALFTMRHLYQKEYGSLKNG</sequence>
<feature type="chain" id="PRO_0000349399" description="Probable nitrate transporter NarT">
    <location>
        <begin position="1"/>
        <end position="389"/>
    </location>
</feature>
<feature type="transmembrane region" description="Helical" evidence="2">
    <location>
        <begin position="14"/>
        <end position="34"/>
    </location>
</feature>
<feature type="transmembrane region" description="Helical" evidence="2">
    <location>
        <begin position="45"/>
        <end position="65"/>
    </location>
</feature>
<feature type="transmembrane region" description="Helical" evidence="2">
    <location>
        <begin position="69"/>
        <end position="89"/>
    </location>
</feature>
<feature type="transmembrane region" description="Helical" evidence="2">
    <location>
        <begin position="97"/>
        <end position="117"/>
    </location>
</feature>
<feature type="transmembrane region" description="Helical" evidence="2">
    <location>
        <begin position="139"/>
        <end position="159"/>
    </location>
</feature>
<feature type="transmembrane region" description="Helical" evidence="2">
    <location>
        <begin position="161"/>
        <end position="181"/>
    </location>
</feature>
<feature type="transmembrane region" description="Helical" evidence="2">
    <location>
        <begin position="211"/>
        <end position="231"/>
    </location>
</feature>
<feature type="transmembrane region" description="Helical" evidence="2">
    <location>
        <begin position="246"/>
        <end position="266"/>
    </location>
</feature>
<feature type="transmembrane region" description="Helical" evidence="2">
    <location>
        <begin position="268"/>
        <end position="288"/>
    </location>
</feature>
<feature type="transmembrane region" description="Helical" evidence="2">
    <location>
        <begin position="294"/>
        <end position="314"/>
    </location>
</feature>
<feature type="transmembrane region" description="Helical" evidence="2">
    <location>
        <begin position="331"/>
        <end position="351"/>
    </location>
</feature>
<feature type="transmembrane region" description="Helical" evidence="2">
    <location>
        <begin position="353"/>
        <end position="373"/>
    </location>
</feature>
<evidence type="ECO:0000250" key="1"/>
<evidence type="ECO:0000255" key="2"/>
<evidence type="ECO:0000305" key="3"/>
<gene>
    <name type="primary">narT</name>
    <name type="synonym">narK</name>
    <name type="ordered locus">SAUSA300_2333</name>
</gene>
<comment type="function">
    <text evidence="1">Probably required for nitrate uptake under anoxic conditions. Also possibly involved in excretion of nitrite produced by the dissimilatory reduction of nitrate (By similarity).</text>
</comment>
<comment type="subcellular location">
    <subcellularLocation>
        <location evidence="3">Cell membrane</location>
        <topology evidence="3">Multi-pass membrane protein</topology>
    </subcellularLocation>
</comment>
<comment type="induction">
    <text evidence="1">Positively regulated by the two-component system NreB/NreC.</text>
</comment>
<comment type="similarity">
    <text evidence="3">Belongs to the major facilitator superfamily. Nitrate/nitrite porter (TC 2.A.1.8) family.</text>
</comment>
<keyword id="KW-1003">Cell membrane</keyword>
<keyword id="KW-0472">Membrane</keyword>
<keyword id="KW-0534">Nitrate assimilation</keyword>
<keyword id="KW-0812">Transmembrane</keyword>
<keyword id="KW-1133">Transmembrane helix</keyword>
<keyword id="KW-0813">Transport</keyword>
<organism>
    <name type="scientific">Staphylococcus aureus (strain USA300)</name>
    <dbReference type="NCBI Taxonomy" id="367830"/>
    <lineage>
        <taxon>Bacteria</taxon>
        <taxon>Bacillati</taxon>
        <taxon>Bacillota</taxon>
        <taxon>Bacilli</taxon>
        <taxon>Bacillales</taxon>
        <taxon>Staphylococcaceae</taxon>
        <taxon>Staphylococcus</taxon>
    </lineage>
</organism>
<name>NART_STAA3</name>
<protein>
    <recommendedName>
        <fullName>Probable nitrate transporter NarT</fullName>
    </recommendedName>
</protein>
<proteinExistence type="inferred from homology"/>
<accession>Q2FEB0</accession>